<name>DCD_HELPS</name>
<dbReference type="EC" id="3.5.4.13" evidence="1"/>
<dbReference type="EMBL" id="CP001072">
    <property type="protein sequence ID" value="ACD48520.1"/>
    <property type="molecule type" value="Genomic_DNA"/>
</dbReference>
<dbReference type="RefSeq" id="WP_000523082.1">
    <property type="nucleotide sequence ID" value="NC_010698.2"/>
</dbReference>
<dbReference type="SMR" id="B2UUI8"/>
<dbReference type="KEGG" id="hps:HPSH_05555"/>
<dbReference type="HOGENOM" id="CLU_087476_4_0_7"/>
<dbReference type="UniPathway" id="UPA00610">
    <property type="reaction ID" value="UER00665"/>
</dbReference>
<dbReference type="GO" id="GO:0008829">
    <property type="term" value="F:dCTP deaminase activity"/>
    <property type="evidence" value="ECO:0007669"/>
    <property type="project" value="UniProtKB-UniRule"/>
</dbReference>
<dbReference type="GO" id="GO:0000166">
    <property type="term" value="F:nucleotide binding"/>
    <property type="evidence" value="ECO:0007669"/>
    <property type="project" value="UniProtKB-KW"/>
</dbReference>
<dbReference type="GO" id="GO:0006226">
    <property type="term" value="P:dUMP biosynthetic process"/>
    <property type="evidence" value="ECO:0007669"/>
    <property type="project" value="UniProtKB-UniPathway"/>
</dbReference>
<dbReference type="GO" id="GO:0006229">
    <property type="term" value="P:dUTP biosynthetic process"/>
    <property type="evidence" value="ECO:0007669"/>
    <property type="project" value="UniProtKB-UniRule"/>
</dbReference>
<dbReference type="GO" id="GO:0015949">
    <property type="term" value="P:nucleobase-containing small molecule interconversion"/>
    <property type="evidence" value="ECO:0007669"/>
    <property type="project" value="TreeGrafter"/>
</dbReference>
<dbReference type="CDD" id="cd07557">
    <property type="entry name" value="trimeric_dUTPase"/>
    <property type="match status" value="1"/>
</dbReference>
<dbReference type="FunFam" id="2.70.40.10:FF:000006">
    <property type="entry name" value="dCTP deaminase"/>
    <property type="match status" value="1"/>
</dbReference>
<dbReference type="Gene3D" id="2.70.40.10">
    <property type="match status" value="1"/>
</dbReference>
<dbReference type="HAMAP" id="MF_00146">
    <property type="entry name" value="dCTP_deaminase"/>
    <property type="match status" value="1"/>
</dbReference>
<dbReference type="InterPro" id="IPR011962">
    <property type="entry name" value="dCTP_deaminase"/>
</dbReference>
<dbReference type="InterPro" id="IPR036157">
    <property type="entry name" value="dUTPase-like_sf"/>
</dbReference>
<dbReference type="InterPro" id="IPR033704">
    <property type="entry name" value="dUTPase_trimeric"/>
</dbReference>
<dbReference type="NCBIfam" id="TIGR02274">
    <property type="entry name" value="dCTP_deam"/>
    <property type="match status" value="1"/>
</dbReference>
<dbReference type="PANTHER" id="PTHR42680">
    <property type="entry name" value="DCTP DEAMINASE"/>
    <property type="match status" value="1"/>
</dbReference>
<dbReference type="PANTHER" id="PTHR42680:SF3">
    <property type="entry name" value="DCTP DEAMINASE"/>
    <property type="match status" value="1"/>
</dbReference>
<dbReference type="Pfam" id="PF22769">
    <property type="entry name" value="DCD"/>
    <property type="match status" value="1"/>
</dbReference>
<dbReference type="SUPFAM" id="SSF51283">
    <property type="entry name" value="dUTPase-like"/>
    <property type="match status" value="1"/>
</dbReference>
<proteinExistence type="inferred from homology"/>
<protein>
    <recommendedName>
        <fullName evidence="1">dCTP deaminase</fullName>
        <ecNumber evidence="1">3.5.4.13</ecNumber>
    </recommendedName>
    <alternativeName>
        <fullName evidence="1">Deoxycytidine triphosphate deaminase</fullName>
    </alternativeName>
</protein>
<organism>
    <name type="scientific">Helicobacter pylori (strain Shi470)</name>
    <dbReference type="NCBI Taxonomy" id="512562"/>
    <lineage>
        <taxon>Bacteria</taxon>
        <taxon>Pseudomonadati</taxon>
        <taxon>Campylobacterota</taxon>
        <taxon>Epsilonproteobacteria</taxon>
        <taxon>Campylobacterales</taxon>
        <taxon>Helicobacteraceae</taxon>
        <taxon>Helicobacter</taxon>
    </lineage>
</organism>
<keyword id="KW-0378">Hydrolase</keyword>
<keyword id="KW-0546">Nucleotide metabolism</keyword>
<keyword id="KW-0547">Nucleotide-binding</keyword>
<comment type="function">
    <text evidence="1">Catalyzes the deamination of dCTP to dUTP.</text>
</comment>
<comment type="catalytic activity">
    <reaction evidence="1">
        <text>dCTP + H2O + H(+) = dUTP + NH4(+)</text>
        <dbReference type="Rhea" id="RHEA:22680"/>
        <dbReference type="ChEBI" id="CHEBI:15377"/>
        <dbReference type="ChEBI" id="CHEBI:15378"/>
        <dbReference type="ChEBI" id="CHEBI:28938"/>
        <dbReference type="ChEBI" id="CHEBI:61481"/>
        <dbReference type="ChEBI" id="CHEBI:61555"/>
        <dbReference type="EC" id="3.5.4.13"/>
    </reaction>
</comment>
<comment type="pathway">
    <text evidence="1">Pyrimidine metabolism; dUMP biosynthesis; dUMP from dCTP (dUTP route): step 1/2.</text>
</comment>
<comment type="subunit">
    <text evidence="1">Homotrimer.</text>
</comment>
<comment type="similarity">
    <text evidence="1">Belongs to the dCTP deaminase family.</text>
</comment>
<reference key="1">
    <citation type="submission" date="2008-05" db="EMBL/GenBank/DDBJ databases">
        <title>Genome sequence of Helicobacter pylori from the remote Amazon: traces of Asian ancestry of the first Americans.</title>
        <authorList>
            <person name="Kersulyte D."/>
            <person name="Kalia A."/>
            <person name="Gilman R.H."/>
            <person name="Berg D.E."/>
        </authorList>
    </citation>
    <scope>NUCLEOTIDE SEQUENCE [LARGE SCALE GENOMIC DNA]</scope>
    <source>
        <strain>Shi470</strain>
    </source>
</reference>
<accession>B2UUI8</accession>
<gene>
    <name evidence="1" type="primary">dcd</name>
    <name type="ordered locus">HPSH_05555</name>
</gene>
<feature type="chain" id="PRO_1000096431" description="dCTP deaminase">
    <location>
        <begin position="1"/>
        <end position="188"/>
    </location>
</feature>
<feature type="active site" description="Proton donor/acceptor" evidence="1">
    <location>
        <position position="135"/>
    </location>
</feature>
<feature type="binding site" evidence="1">
    <location>
        <begin position="109"/>
        <end position="114"/>
    </location>
    <ligand>
        <name>dCTP</name>
        <dbReference type="ChEBI" id="CHEBI:61481"/>
    </ligand>
</feature>
<feature type="binding site" evidence="1">
    <location>
        <position position="154"/>
    </location>
    <ligand>
        <name>dCTP</name>
        <dbReference type="ChEBI" id="CHEBI:61481"/>
    </ligand>
</feature>
<feature type="binding site" evidence="1">
    <location>
        <position position="168"/>
    </location>
    <ligand>
        <name>dCTP</name>
        <dbReference type="ChEBI" id="CHEBI:61481"/>
    </ligand>
</feature>
<feature type="binding site" evidence="1">
    <location>
        <position position="178"/>
    </location>
    <ligand>
        <name>dCTP</name>
        <dbReference type="ChEBI" id="CHEBI:61481"/>
    </ligand>
</feature>
<evidence type="ECO:0000255" key="1">
    <source>
        <dbReference type="HAMAP-Rule" id="MF_00146"/>
    </source>
</evidence>
<sequence>MGLKADSWIKKMSLEHGMISPFCEKQIGKDVISYGLSSYGYDIRVGSEFMLFDNKNALIDPKNFDPNNTTKIDASKEGFFILPANAFALAHTIEYFKMPKDTLAICLGKSTYARCGIIVNVTPFEPEFEGYITIEISNTTNLPAKVYANEGIAQVVFLQGDEVCEQSYKDRGGKYQGQVGITLPKILK</sequence>